<proteinExistence type="inferred from homology"/>
<name>MUB1_ASPTN</name>
<comment type="function">
    <text evidence="1">Involved in determination of the onset of polarized growth and morphogenesis. Plays a role in the regulation of branching in hyphae and spore formation (By similarity).</text>
</comment>
<comment type="subcellular location">
    <subcellularLocation>
        <location evidence="1">Cytoplasm</location>
    </subcellularLocation>
</comment>
<comment type="similarity">
    <text evidence="4">Belongs to the MUB1/samB family.</text>
</comment>
<organism>
    <name type="scientific">Aspergillus terreus (strain NIH 2624 / FGSC A1156)</name>
    <dbReference type="NCBI Taxonomy" id="341663"/>
    <lineage>
        <taxon>Eukaryota</taxon>
        <taxon>Fungi</taxon>
        <taxon>Dikarya</taxon>
        <taxon>Ascomycota</taxon>
        <taxon>Pezizomycotina</taxon>
        <taxon>Eurotiomycetes</taxon>
        <taxon>Eurotiomycetidae</taxon>
        <taxon>Eurotiales</taxon>
        <taxon>Aspergillaceae</taxon>
        <taxon>Aspergillus</taxon>
        <taxon>Aspergillus subgen. Circumdati</taxon>
    </lineage>
</organism>
<accession>Q0CW83</accession>
<gene>
    <name type="primary">samB</name>
    <name type="ORF">ATEG_02051</name>
</gene>
<dbReference type="EMBL" id="CH476596">
    <property type="protein sequence ID" value="EAU37013.1"/>
    <property type="molecule type" value="Genomic_DNA"/>
</dbReference>
<dbReference type="RefSeq" id="XP_001211229.1">
    <property type="nucleotide sequence ID" value="XM_001211229.1"/>
</dbReference>
<dbReference type="SMR" id="Q0CW83"/>
<dbReference type="EnsemblFungi" id="EAU37013">
    <property type="protein sequence ID" value="EAU37013"/>
    <property type="gene ID" value="ATEG_02051"/>
</dbReference>
<dbReference type="GeneID" id="4316474"/>
<dbReference type="VEuPathDB" id="FungiDB:ATEG_02051"/>
<dbReference type="eggNOG" id="ENOG502QTM3">
    <property type="taxonomic scope" value="Eukaryota"/>
</dbReference>
<dbReference type="HOGENOM" id="CLU_014851_0_0_1"/>
<dbReference type="OMA" id="QDMQYWA"/>
<dbReference type="OrthoDB" id="5594178at2759"/>
<dbReference type="Proteomes" id="UP000007963">
    <property type="component" value="Unassembled WGS sequence"/>
</dbReference>
<dbReference type="GO" id="GO:0005737">
    <property type="term" value="C:cytoplasm"/>
    <property type="evidence" value="ECO:0007669"/>
    <property type="project" value="UniProtKB-SubCell"/>
</dbReference>
<dbReference type="GO" id="GO:1990304">
    <property type="term" value="C:MUB1-RAD6-UBR2 ubiquitin ligase complex"/>
    <property type="evidence" value="ECO:0007669"/>
    <property type="project" value="TreeGrafter"/>
</dbReference>
<dbReference type="GO" id="GO:0008270">
    <property type="term" value="F:zinc ion binding"/>
    <property type="evidence" value="ECO:0007669"/>
    <property type="project" value="UniProtKB-KW"/>
</dbReference>
<dbReference type="GO" id="GO:0007163">
    <property type="term" value="P:establishment or maintenance of cell polarity"/>
    <property type="evidence" value="ECO:0007669"/>
    <property type="project" value="TreeGrafter"/>
</dbReference>
<dbReference type="GO" id="GO:1900735">
    <property type="term" value="P:positive regulation of flocculation"/>
    <property type="evidence" value="ECO:0007669"/>
    <property type="project" value="EnsemblFungi"/>
</dbReference>
<dbReference type="GO" id="GO:0030435">
    <property type="term" value="P:sporulation resulting in formation of a cellular spore"/>
    <property type="evidence" value="ECO:0007669"/>
    <property type="project" value="UniProtKB-KW"/>
</dbReference>
<dbReference type="GO" id="GO:0006511">
    <property type="term" value="P:ubiquitin-dependent protein catabolic process"/>
    <property type="evidence" value="ECO:0007669"/>
    <property type="project" value="TreeGrafter"/>
</dbReference>
<dbReference type="FunFam" id="6.10.140.2220:FF:000003">
    <property type="entry name" value="MYND-type zinc finger protein"/>
    <property type="match status" value="1"/>
</dbReference>
<dbReference type="Gene3D" id="6.10.140.2220">
    <property type="match status" value="1"/>
</dbReference>
<dbReference type="InterPro" id="IPR016024">
    <property type="entry name" value="ARM-type_fold"/>
</dbReference>
<dbReference type="InterPro" id="IPR051664">
    <property type="entry name" value="MYND-type_zinc_finger"/>
</dbReference>
<dbReference type="InterPro" id="IPR002893">
    <property type="entry name" value="Znf_MYND"/>
</dbReference>
<dbReference type="PANTHER" id="PTHR47442">
    <property type="entry name" value="MYND-TYPE ZINC FINGER PROTEIN MUB1"/>
    <property type="match status" value="1"/>
</dbReference>
<dbReference type="PANTHER" id="PTHR47442:SF1">
    <property type="entry name" value="MYND-TYPE ZINC FINGER PROTEIN MUB1"/>
    <property type="match status" value="1"/>
</dbReference>
<dbReference type="Pfam" id="PF01753">
    <property type="entry name" value="zf-MYND"/>
    <property type="match status" value="1"/>
</dbReference>
<dbReference type="SUPFAM" id="SSF48371">
    <property type="entry name" value="ARM repeat"/>
    <property type="match status" value="1"/>
</dbReference>
<dbReference type="SUPFAM" id="SSF144232">
    <property type="entry name" value="HIT/MYND zinc finger-like"/>
    <property type="match status" value="1"/>
</dbReference>
<dbReference type="PROSITE" id="PS01360">
    <property type="entry name" value="ZF_MYND_1"/>
    <property type="match status" value="1"/>
</dbReference>
<dbReference type="PROSITE" id="PS50865">
    <property type="entry name" value="ZF_MYND_2"/>
    <property type="match status" value="1"/>
</dbReference>
<sequence>MREVNFSIPNVNKASVNITTTLYDRRALDCTSTLPLINSLNHLAYLTTSSARIRDILTVDGGIERLVCILKEGRSRDLMEMWKWSLAFQCVVNIGVRGSESVRTRVVEADMVPVIATILDNYIKVVDKARARADPDTQRHSSRHHAKPVPTAGEPSARPSLLEQAAHTEQRASRRQAPPPNIEIPPYFQDNHVADSNAMDISSSPRAPMTSPPERSTFGQEAHNHRTHDPRYLHPGHRQRAMQPLATALPPMDAADGFGLRPVRDTERLPSMLPGLQNGITSQPDSPTTPSGPIQARNNAATTVPVQRPTLRQQRSASGDSDDGNAESFSMEDGARSEATSEPIVQNQMEIDEVGDRQAMLNGVSDGHDLTVTDPSEGQEAETFNITHRSTVDGSTINNGNTQTNTALGLSPAQAANTTNSPNIVPSPYSLYFRDRSATASQNVLTTMPRDEDVLMSLQLLAYVSKYCNLRSYFQNSHFVPKLKVDRELQMFEDGSSPMETAEEEDEYLLPDDVNIFPLVEKFTVRHHSKDMQYWACVVMRNLCRKDESRGGIRQCAYYKCGKWEEFQRQFAKCRRCRRTKYCSKDCQKAAWVYHRHWCHTTP</sequence>
<reference key="1">
    <citation type="submission" date="2005-09" db="EMBL/GenBank/DDBJ databases">
        <title>Annotation of the Aspergillus terreus NIH2624 genome.</title>
        <authorList>
            <person name="Birren B.W."/>
            <person name="Lander E.S."/>
            <person name="Galagan J.E."/>
            <person name="Nusbaum C."/>
            <person name="Devon K."/>
            <person name="Henn M."/>
            <person name="Ma L.-J."/>
            <person name="Jaffe D.B."/>
            <person name="Butler J."/>
            <person name="Alvarez P."/>
            <person name="Gnerre S."/>
            <person name="Grabherr M."/>
            <person name="Kleber M."/>
            <person name="Mauceli E.W."/>
            <person name="Brockman W."/>
            <person name="Rounsley S."/>
            <person name="Young S.K."/>
            <person name="LaButti K."/>
            <person name="Pushparaj V."/>
            <person name="DeCaprio D."/>
            <person name="Crawford M."/>
            <person name="Koehrsen M."/>
            <person name="Engels R."/>
            <person name="Montgomery P."/>
            <person name="Pearson M."/>
            <person name="Howarth C."/>
            <person name="Larson L."/>
            <person name="Luoma S."/>
            <person name="White J."/>
            <person name="Alvarado L."/>
            <person name="Kodira C.D."/>
            <person name="Zeng Q."/>
            <person name="Oleary S."/>
            <person name="Yandava C."/>
            <person name="Denning D.W."/>
            <person name="Nierman W.C."/>
            <person name="Milne T."/>
            <person name="Madden K."/>
        </authorList>
    </citation>
    <scope>NUCLEOTIDE SEQUENCE [LARGE SCALE GENOMIC DNA]</scope>
    <source>
        <strain>NIH 2624 / FGSC A1156</strain>
    </source>
</reference>
<feature type="chain" id="PRO_0000393327" description="MYND-type zinc finger protein samB">
    <location>
        <begin position="1"/>
        <end position="603"/>
    </location>
</feature>
<feature type="zinc finger region" description="MYND-type; degenerate" evidence="2">
    <location>
        <begin position="558"/>
        <end position="599"/>
    </location>
</feature>
<feature type="region of interest" description="Disordered" evidence="3">
    <location>
        <begin position="133"/>
        <end position="239"/>
    </location>
</feature>
<feature type="region of interest" description="Disordered" evidence="3">
    <location>
        <begin position="269"/>
        <end position="347"/>
    </location>
</feature>
<feature type="region of interest" description="Disordered" evidence="3">
    <location>
        <begin position="361"/>
        <end position="398"/>
    </location>
</feature>
<feature type="compositionally biased region" description="Basic and acidic residues" evidence="3">
    <location>
        <begin position="222"/>
        <end position="232"/>
    </location>
</feature>
<feature type="compositionally biased region" description="Polar residues" evidence="3">
    <location>
        <begin position="278"/>
        <end position="319"/>
    </location>
</feature>
<feature type="compositionally biased region" description="Polar residues" evidence="3">
    <location>
        <begin position="338"/>
        <end position="347"/>
    </location>
</feature>
<feature type="compositionally biased region" description="Polar residues" evidence="3">
    <location>
        <begin position="382"/>
        <end position="398"/>
    </location>
</feature>
<feature type="binding site" evidence="2">
    <location>
        <position position="574"/>
    </location>
    <ligand>
        <name>Zn(2+)</name>
        <dbReference type="ChEBI" id="CHEBI:29105"/>
    </ligand>
</feature>
<feature type="binding site" evidence="2">
    <location>
        <position position="577"/>
    </location>
    <ligand>
        <name>Zn(2+)</name>
        <dbReference type="ChEBI" id="CHEBI:29105"/>
    </ligand>
</feature>
<feature type="binding site" evidence="2">
    <location>
        <position position="595"/>
    </location>
    <ligand>
        <name>Zn(2+)</name>
        <dbReference type="ChEBI" id="CHEBI:29105"/>
    </ligand>
</feature>
<feature type="binding site" evidence="2">
    <location>
        <position position="599"/>
    </location>
    <ligand>
        <name>Zn(2+)</name>
        <dbReference type="ChEBI" id="CHEBI:29105"/>
    </ligand>
</feature>
<protein>
    <recommendedName>
        <fullName>MYND-type zinc finger protein samB</fullName>
    </recommendedName>
    <alternativeName>
        <fullName>Suppressor of anucleate metulae protein B</fullName>
    </alternativeName>
</protein>
<evidence type="ECO:0000250" key="1"/>
<evidence type="ECO:0000255" key="2">
    <source>
        <dbReference type="PROSITE-ProRule" id="PRU00134"/>
    </source>
</evidence>
<evidence type="ECO:0000256" key="3">
    <source>
        <dbReference type="SAM" id="MobiDB-lite"/>
    </source>
</evidence>
<evidence type="ECO:0000305" key="4"/>
<keyword id="KW-0963">Cytoplasm</keyword>
<keyword id="KW-0479">Metal-binding</keyword>
<keyword id="KW-1185">Reference proteome</keyword>
<keyword id="KW-0749">Sporulation</keyword>
<keyword id="KW-0862">Zinc</keyword>
<keyword id="KW-0863">Zinc-finger</keyword>